<comment type="function">
    <text evidence="1">Plays an important role in the de novo pathway of purine nucleotide biosynthesis. Catalyzes the first committed step in the biosynthesis of AMP from IMP.</text>
</comment>
<comment type="catalytic activity">
    <reaction evidence="1">
        <text>IMP + L-aspartate + GTP = N(6)-(1,2-dicarboxyethyl)-AMP + GDP + phosphate + 2 H(+)</text>
        <dbReference type="Rhea" id="RHEA:15753"/>
        <dbReference type="ChEBI" id="CHEBI:15378"/>
        <dbReference type="ChEBI" id="CHEBI:29991"/>
        <dbReference type="ChEBI" id="CHEBI:37565"/>
        <dbReference type="ChEBI" id="CHEBI:43474"/>
        <dbReference type="ChEBI" id="CHEBI:57567"/>
        <dbReference type="ChEBI" id="CHEBI:58053"/>
        <dbReference type="ChEBI" id="CHEBI:58189"/>
        <dbReference type="EC" id="6.3.4.4"/>
    </reaction>
</comment>
<comment type="cofactor">
    <cofactor evidence="1">
        <name>Mg(2+)</name>
        <dbReference type="ChEBI" id="CHEBI:18420"/>
    </cofactor>
    <text evidence="1">Binds 1 Mg(2+) ion per subunit.</text>
</comment>
<comment type="pathway">
    <text evidence="1">Purine metabolism; AMP biosynthesis via de novo pathway; AMP from IMP: step 1/2.</text>
</comment>
<comment type="subunit">
    <text evidence="1">Homodimer.</text>
</comment>
<comment type="subcellular location">
    <subcellularLocation>
        <location evidence="1">Cytoplasm</location>
    </subcellularLocation>
</comment>
<comment type="similarity">
    <text evidence="1">Belongs to the adenylosuccinate synthetase family.</text>
</comment>
<evidence type="ECO:0000255" key="1">
    <source>
        <dbReference type="HAMAP-Rule" id="MF_00011"/>
    </source>
</evidence>
<proteinExistence type="inferred from homology"/>
<accession>B1YG93</accession>
<protein>
    <recommendedName>
        <fullName evidence="1">Adenylosuccinate synthetase</fullName>
        <shortName evidence="1">AMPSase</shortName>
        <shortName evidence="1">AdSS</shortName>
        <ecNumber evidence="1">6.3.4.4</ecNumber>
    </recommendedName>
    <alternativeName>
        <fullName evidence="1">IMP--aspartate ligase</fullName>
    </alternativeName>
</protein>
<organism>
    <name type="scientific">Exiguobacterium sibiricum (strain DSM 17290 / CCUG 55495 / CIP 109462 / JCM 13490 / 255-15)</name>
    <dbReference type="NCBI Taxonomy" id="262543"/>
    <lineage>
        <taxon>Bacteria</taxon>
        <taxon>Bacillati</taxon>
        <taxon>Bacillota</taxon>
        <taxon>Bacilli</taxon>
        <taxon>Bacillales</taxon>
        <taxon>Bacillales Family XII. Incertae Sedis</taxon>
        <taxon>Exiguobacterium</taxon>
    </lineage>
</organism>
<dbReference type="EC" id="6.3.4.4" evidence="1"/>
<dbReference type="EMBL" id="CP001022">
    <property type="protein sequence ID" value="ACB62477.1"/>
    <property type="molecule type" value="Genomic_DNA"/>
</dbReference>
<dbReference type="RefSeq" id="WP_012371892.1">
    <property type="nucleotide sequence ID" value="NC_010556.1"/>
</dbReference>
<dbReference type="SMR" id="B1YG93"/>
<dbReference type="STRING" id="262543.Exig_3032"/>
<dbReference type="KEGG" id="esi:Exig_3032"/>
<dbReference type="eggNOG" id="COG0104">
    <property type="taxonomic scope" value="Bacteria"/>
</dbReference>
<dbReference type="HOGENOM" id="CLU_029848_0_0_9"/>
<dbReference type="OrthoDB" id="9807553at2"/>
<dbReference type="UniPathway" id="UPA00075">
    <property type="reaction ID" value="UER00335"/>
</dbReference>
<dbReference type="Proteomes" id="UP000001681">
    <property type="component" value="Chromosome"/>
</dbReference>
<dbReference type="GO" id="GO:0005737">
    <property type="term" value="C:cytoplasm"/>
    <property type="evidence" value="ECO:0007669"/>
    <property type="project" value="UniProtKB-SubCell"/>
</dbReference>
<dbReference type="GO" id="GO:0004019">
    <property type="term" value="F:adenylosuccinate synthase activity"/>
    <property type="evidence" value="ECO:0007669"/>
    <property type="project" value="UniProtKB-UniRule"/>
</dbReference>
<dbReference type="GO" id="GO:0005525">
    <property type="term" value="F:GTP binding"/>
    <property type="evidence" value="ECO:0007669"/>
    <property type="project" value="UniProtKB-UniRule"/>
</dbReference>
<dbReference type="GO" id="GO:0000287">
    <property type="term" value="F:magnesium ion binding"/>
    <property type="evidence" value="ECO:0007669"/>
    <property type="project" value="UniProtKB-UniRule"/>
</dbReference>
<dbReference type="GO" id="GO:0044208">
    <property type="term" value="P:'de novo' AMP biosynthetic process"/>
    <property type="evidence" value="ECO:0007669"/>
    <property type="project" value="UniProtKB-UniRule"/>
</dbReference>
<dbReference type="GO" id="GO:0046040">
    <property type="term" value="P:IMP metabolic process"/>
    <property type="evidence" value="ECO:0007669"/>
    <property type="project" value="TreeGrafter"/>
</dbReference>
<dbReference type="CDD" id="cd03108">
    <property type="entry name" value="AdSS"/>
    <property type="match status" value="1"/>
</dbReference>
<dbReference type="FunFam" id="1.10.300.10:FF:000001">
    <property type="entry name" value="Adenylosuccinate synthetase"/>
    <property type="match status" value="1"/>
</dbReference>
<dbReference type="FunFam" id="3.90.170.10:FF:000001">
    <property type="entry name" value="Adenylosuccinate synthetase"/>
    <property type="match status" value="1"/>
</dbReference>
<dbReference type="Gene3D" id="3.40.440.10">
    <property type="entry name" value="Adenylosuccinate Synthetase, subunit A, domain 1"/>
    <property type="match status" value="1"/>
</dbReference>
<dbReference type="Gene3D" id="1.10.300.10">
    <property type="entry name" value="Adenylosuccinate Synthetase, subunit A, domain 2"/>
    <property type="match status" value="1"/>
</dbReference>
<dbReference type="Gene3D" id="3.90.170.10">
    <property type="entry name" value="Adenylosuccinate Synthetase, subunit A, domain 3"/>
    <property type="match status" value="1"/>
</dbReference>
<dbReference type="HAMAP" id="MF_00011">
    <property type="entry name" value="Adenylosucc_synth"/>
    <property type="match status" value="1"/>
</dbReference>
<dbReference type="InterPro" id="IPR018220">
    <property type="entry name" value="Adenylosuccin_syn_GTP-bd"/>
</dbReference>
<dbReference type="InterPro" id="IPR033128">
    <property type="entry name" value="Adenylosuccin_syn_Lys_AS"/>
</dbReference>
<dbReference type="InterPro" id="IPR042109">
    <property type="entry name" value="Adenylosuccinate_synth_dom1"/>
</dbReference>
<dbReference type="InterPro" id="IPR042110">
    <property type="entry name" value="Adenylosuccinate_synth_dom2"/>
</dbReference>
<dbReference type="InterPro" id="IPR042111">
    <property type="entry name" value="Adenylosuccinate_synth_dom3"/>
</dbReference>
<dbReference type="InterPro" id="IPR001114">
    <property type="entry name" value="Adenylosuccinate_synthetase"/>
</dbReference>
<dbReference type="InterPro" id="IPR027417">
    <property type="entry name" value="P-loop_NTPase"/>
</dbReference>
<dbReference type="NCBIfam" id="NF002223">
    <property type="entry name" value="PRK01117.1"/>
    <property type="match status" value="1"/>
</dbReference>
<dbReference type="NCBIfam" id="TIGR00184">
    <property type="entry name" value="purA"/>
    <property type="match status" value="1"/>
</dbReference>
<dbReference type="PANTHER" id="PTHR11846">
    <property type="entry name" value="ADENYLOSUCCINATE SYNTHETASE"/>
    <property type="match status" value="1"/>
</dbReference>
<dbReference type="PANTHER" id="PTHR11846:SF0">
    <property type="entry name" value="ADENYLOSUCCINATE SYNTHETASE"/>
    <property type="match status" value="1"/>
</dbReference>
<dbReference type="Pfam" id="PF00709">
    <property type="entry name" value="Adenylsucc_synt"/>
    <property type="match status" value="1"/>
</dbReference>
<dbReference type="SMART" id="SM00788">
    <property type="entry name" value="Adenylsucc_synt"/>
    <property type="match status" value="1"/>
</dbReference>
<dbReference type="SUPFAM" id="SSF52540">
    <property type="entry name" value="P-loop containing nucleoside triphosphate hydrolases"/>
    <property type="match status" value="1"/>
</dbReference>
<dbReference type="PROSITE" id="PS01266">
    <property type="entry name" value="ADENYLOSUCCIN_SYN_1"/>
    <property type="match status" value="1"/>
</dbReference>
<dbReference type="PROSITE" id="PS00513">
    <property type="entry name" value="ADENYLOSUCCIN_SYN_2"/>
    <property type="match status" value="1"/>
</dbReference>
<reference key="1">
    <citation type="submission" date="2008-04" db="EMBL/GenBank/DDBJ databases">
        <title>Complete sequence of chromosome of Exiguobacterium sibiricum 255-15.</title>
        <authorList>
            <consortium name="US DOE Joint Genome Institute"/>
            <person name="Copeland A."/>
            <person name="Lucas S."/>
            <person name="Lapidus A."/>
            <person name="Glavina del Rio T."/>
            <person name="Dalin E."/>
            <person name="Tice H."/>
            <person name="Bruce D."/>
            <person name="Goodwin L."/>
            <person name="Pitluck S."/>
            <person name="Kiss H."/>
            <person name="Chertkov O."/>
            <person name="Monk C."/>
            <person name="Brettin T."/>
            <person name="Detter J.C."/>
            <person name="Han C."/>
            <person name="Kuske C.R."/>
            <person name="Schmutz J."/>
            <person name="Larimer F."/>
            <person name="Land M."/>
            <person name="Hauser L."/>
            <person name="Kyrpides N."/>
            <person name="Mikhailova N."/>
            <person name="Vishnivetskaya T."/>
            <person name="Rodrigues D.F."/>
            <person name="Gilichinsky D."/>
            <person name="Tiedje J."/>
            <person name="Richardson P."/>
        </authorList>
    </citation>
    <scope>NUCLEOTIDE SEQUENCE [LARGE SCALE GENOMIC DNA]</scope>
    <source>
        <strain>DSM 17290 / CCUG 55495 / CIP 109462 / JCM 13490 / 255-15</strain>
    </source>
</reference>
<name>PURA_EXIS2</name>
<sequence length="430" mass="47604">MSSVVVVGTQWGDEGKGKITDFLSKKADVVARYQGGDNAGHTIVFNNETYKLHLIPSGIFYSDKKCVIGNGLVVNPKSLVKELKYLHDRGVSTDNLLISNRAHVILPYHQLQDQLEEEAKGDAKVGTTLKGIGPCYMDKAARIGIRMADLLDKETFAEKLKIVLEQKNRMFTKMYDAEAIAFDDIFEEYYAYGQEFAKYVCDTSVVVNDSLDKGEKVLFEGAQGVLLDLDHGTYPFVTSSNASAGGVASGVGVGPARIDHVVGVCKAYTSRVGDGPFPTELFDEIGHQIREVGREYGTTTGRPRRVGWFDSVVVRHSRRTSGLTDLSLNSIDVLTGIETLKICTSYEFNGKQIDEYPASFRDLEACVPVYEELPGWKEDITHIRKFEDLPINAQNYVKRIADLTGISLVTFSVGPGREQTVVLRDLYEEA</sequence>
<gene>
    <name evidence="1" type="primary">purA</name>
    <name type="ordered locus">Exig_3032</name>
</gene>
<keyword id="KW-0963">Cytoplasm</keyword>
<keyword id="KW-0342">GTP-binding</keyword>
<keyword id="KW-0436">Ligase</keyword>
<keyword id="KW-0460">Magnesium</keyword>
<keyword id="KW-0479">Metal-binding</keyword>
<keyword id="KW-0547">Nucleotide-binding</keyword>
<keyword id="KW-0658">Purine biosynthesis</keyword>
<keyword id="KW-1185">Reference proteome</keyword>
<feature type="chain" id="PRO_1000089293" description="Adenylosuccinate synthetase">
    <location>
        <begin position="1"/>
        <end position="430"/>
    </location>
</feature>
<feature type="active site" description="Proton acceptor" evidence="1">
    <location>
        <position position="13"/>
    </location>
</feature>
<feature type="active site" description="Proton donor" evidence="1">
    <location>
        <position position="41"/>
    </location>
</feature>
<feature type="binding site" evidence="1">
    <location>
        <begin position="12"/>
        <end position="18"/>
    </location>
    <ligand>
        <name>GTP</name>
        <dbReference type="ChEBI" id="CHEBI:37565"/>
    </ligand>
</feature>
<feature type="binding site" description="in other chain" evidence="1">
    <location>
        <begin position="13"/>
        <end position="16"/>
    </location>
    <ligand>
        <name>IMP</name>
        <dbReference type="ChEBI" id="CHEBI:58053"/>
        <note>ligand shared between dimeric partners</note>
    </ligand>
</feature>
<feature type="binding site" evidence="1">
    <location>
        <position position="13"/>
    </location>
    <ligand>
        <name>Mg(2+)</name>
        <dbReference type="ChEBI" id="CHEBI:18420"/>
    </ligand>
</feature>
<feature type="binding site" description="in other chain" evidence="1">
    <location>
        <begin position="38"/>
        <end position="41"/>
    </location>
    <ligand>
        <name>IMP</name>
        <dbReference type="ChEBI" id="CHEBI:58053"/>
        <note>ligand shared between dimeric partners</note>
    </ligand>
</feature>
<feature type="binding site" evidence="1">
    <location>
        <begin position="40"/>
        <end position="42"/>
    </location>
    <ligand>
        <name>GTP</name>
        <dbReference type="ChEBI" id="CHEBI:37565"/>
    </ligand>
</feature>
<feature type="binding site" evidence="1">
    <location>
        <position position="40"/>
    </location>
    <ligand>
        <name>Mg(2+)</name>
        <dbReference type="ChEBI" id="CHEBI:18420"/>
    </ligand>
</feature>
<feature type="binding site" description="in other chain" evidence="1">
    <location>
        <position position="128"/>
    </location>
    <ligand>
        <name>IMP</name>
        <dbReference type="ChEBI" id="CHEBI:58053"/>
        <note>ligand shared between dimeric partners</note>
    </ligand>
</feature>
<feature type="binding site" evidence="1">
    <location>
        <position position="142"/>
    </location>
    <ligand>
        <name>IMP</name>
        <dbReference type="ChEBI" id="CHEBI:58053"/>
        <note>ligand shared between dimeric partners</note>
    </ligand>
</feature>
<feature type="binding site" description="in other chain" evidence="1">
    <location>
        <position position="223"/>
    </location>
    <ligand>
        <name>IMP</name>
        <dbReference type="ChEBI" id="CHEBI:58053"/>
        <note>ligand shared between dimeric partners</note>
    </ligand>
</feature>
<feature type="binding site" description="in other chain" evidence="1">
    <location>
        <position position="238"/>
    </location>
    <ligand>
        <name>IMP</name>
        <dbReference type="ChEBI" id="CHEBI:58053"/>
        <note>ligand shared between dimeric partners</note>
    </ligand>
</feature>
<feature type="binding site" evidence="1">
    <location>
        <begin position="298"/>
        <end position="304"/>
    </location>
    <ligand>
        <name>substrate</name>
    </ligand>
</feature>
<feature type="binding site" description="in other chain" evidence="1">
    <location>
        <position position="302"/>
    </location>
    <ligand>
        <name>IMP</name>
        <dbReference type="ChEBI" id="CHEBI:58053"/>
        <note>ligand shared between dimeric partners</note>
    </ligand>
</feature>
<feature type="binding site" evidence="1">
    <location>
        <position position="304"/>
    </location>
    <ligand>
        <name>GTP</name>
        <dbReference type="ChEBI" id="CHEBI:37565"/>
    </ligand>
</feature>
<feature type="binding site" evidence="1">
    <location>
        <begin position="330"/>
        <end position="332"/>
    </location>
    <ligand>
        <name>GTP</name>
        <dbReference type="ChEBI" id="CHEBI:37565"/>
    </ligand>
</feature>
<feature type="binding site" evidence="1">
    <location>
        <begin position="412"/>
        <end position="414"/>
    </location>
    <ligand>
        <name>GTP</name>
        <dbReference type="ChEBI" id="CHEBI:37565"/>
    </ligand>
</feature>